<feature type="propeptide" id="PRO_0000449547" description="Leader sequence" evidence="4">
    <location>
        <begin position="1"/>
        <end position="6"/>
    </location>
</feature>
<feature type="chain" id="PRO_0000449548" description="Type II secretion system protein I">
    <location>
        <begin position="7"/>
        <end position="121"/>
    </location>
</feature>
<feature type="transmembrane region" description="Helical" evidence="3">
    <location>
        <begin position="7"/>
        <end position="27"/>
    </location>
</feature>
<feature type="modified residue" description="N-methylmethionine" evidence="1 4">
    <location>
        <position position="7"/>
    </location>
</feature>
<keyword id="KW-0997">Cell inner membrane</keyword>
<keyword id="KW-1003">Cell membrane</keyword>
<keyword id="KW-0472">Membrane</keyword>
<keyword id="KW-0488">Methylation</keyword>
<keyword id="KW-0812">Transmembrane</keyword>
<keyword id="KW-1133">Transmembrane helix</keyword>
<comment type="function">
    <text evidence="2 6">Component of the type II secretion system required for the energy-dependent secretion of extracellular factors such as proteases and toxins from the periplasm (By similarity). Part of the pseudopilus tip complex that is critical for the recognition and binding of secretion substrates (PubMed:22493189).</text>
</comment>
<comment type="subunit">
    <text evidence="2 5">Type II secretion is composed of four main components: the outer membrane complex, the inner membrane complex, the cytoplasmic secretion ATPase and the periplasm-spanning pseudopilus. Interacts with core component PulG (By similarity). Interacts with pseudopilins PulJ and PulK (PubMed:22157749).</text>
</comment>
<comment type="subcellular location">
    <subcellularLocation>
        <location evidence="5">Cell inner membrane</location>
        <topology evidence="3">Single-pass membrane protein</topology>
    </subcellularLocation>
</comment>
<comment type="PTM">
    <text evidence="2">Cleaved by prepilin peptidase.</text>
</comment>
<comment type="PTM">
    <text evidence="2">Methylated by prepilin peptidase at the amino group of the N-terminal methionine once the leader sequence is cleaved by prepilin peptidase.</text>
</comment>
<comment type="disruption phenotype">
    <text evidence="5">Deletion mutant shows longer pili but their number is reduced.</text>
</comment>
<comment type="similarity">
    <text evidence="7">Belongs to the GSP I family.</text>
</comment>
<evidence type="ECO:0000250" key="1">
    <source>
        <dbReference type="UniProtKB" id="P15748"/>
    </source>
</evidence>
<evidence type="ECO:0000250" key="2">
    <source>
        <dbReference type="UniProtKB" id="Q00516"/>
    </source>
</evidence>
<evidence type="ECO:0000255" key="3"/>
<evidence type="ECO:0000255" key="4">
    <source>
        <dbReference type="PROSITE-ProRule" id="PRU01070"/>
    </source>
</evidence>
<evidence type="ECO:0000269" key="5">
    <source>
    </source>
</evidence>
<evidence type="ECO:0000269" key="6">
    <source>
    </source>
</evidence>
<evidence type="ECO:0000305" key="7"/>
<reference key="1">
    <citation type="journal article" date="2012" name="J. Bacteriol.">
        <title>Complete genome sequence of Klebsiella oxytoca KCTC 1686, used in production of 2,3-butanediol.</title>
        <authorList>
            <person name="Shin S.H."/>
            <person name="Kim S."/>
            <person name="Kim J.Y."/>
            <person name="Lee S."/>
            <person name="Um Y."/>
            <person name="Oh M.K."/>
            <person name="Kim Y.R."/>
            <person name="Lee J."/>
            <person name="Yang K.S."/>
        </authorList>
    </citation>
    <scope>NUCLEOTIDE SEQUENCE [LARGE SCALE GENOMIC DNA]</scope>
    <source>
        <strain>ATCC 8724 / DSM 4798 / JCM 20051 / NBRC 3318 / NRRL B-199 / KCTC 1686 / BUCSAV 143 / CCM 1901</strain>
    </source>
</reference>
<reference key="2">
    <citation type="journal article" date="2012" name="EMBO J.">
        <title>Minor pseudopilin self-assembly primes type II secretion pseudopilus elongation.</title>
        <authorList>
            <person name="Cisneros D.A."/>
            <person name="Bond P.J."/>
            <person name="Pugsley A.P."/>
            <person name="Campos M."/>
            <person name="Francetic O."/>
        </authorList>
    </citation>
    <scope>FUNCTION</scope>
    <scope>INTERACTION WITH PULJ AND PULH</scope>
    <scope>DISRUPTION PHENOTYPE</scope>
    <scope>SUBCELLULAR LOCATION</scope>
</reference>
<name>GSPI_KLEM8</name>
<accession>A0A0H3HA88</accession>
<proteinExistence type="evidence at protein level"/>
<organism>
    <name type="scientific">Klebsiella michiganensis (strain ATCC 8724 / DSM 4798 / JCM 20051 / NBRC 3318 / NRRL B-199 / KCTC 1686 / BUCSAV 143 / CCM 1901)</name>
    <dbReference type="NCBI Taxonomy" id="1006551"/>
    <lineage>
        <taxon>Bacteria</taxon>
        <taxon>Pseudomonadati</taxon>
        <taxon>Pseudomonadota</taxon>
        <taxon>Gammaproteobacteria</taxon>
        <taxon>Enterobacterales</taxon>
        <taxon>Enterobacteriaceae</taxon>
        <taxon>Klebsiella/Raoultella group</taxon>
        <taxon>Klebsiella</taxon>
    </lineage>
</organism>
<protein>
    <recommendedName>
        <fullName>Type II secretion system protein I</fullName>
        <shortName>T2SS minor pseudopilin I</shortName>
    </recommendedName>
    <alternativeName>
        <fullName>Putative general secretion pathway protein I</fullName>
    </alternativeName>
</protein>
<gene>
    <name type="primary">pulI</name>
    <name type="ordered locus">KOX_13590</name>
</gene>
<dbReference type="EMBL" id="CP003218">
    <property type="protein sequence ID" value="AEX04442.1"/>
    <property type="molecule type" value="Genomic_DNA"/>
</dbReference>
<dbReference type="SMR" id="A0A0H3HA88"/>
<dbReference type="KEGG" id="kox:KOX_13590"/>
<dbReference type="HOGENOM" id="CLU_121289_3_1_6"/>
<dbReference type="Proteomes" id="UP000007843">
    <property type="component" value="Chromosome"/>
</dbReference>
<dbReference type="GO" id="GO:0005886">
    <property type="term" value="C:plasma membrane"/>
    <property type="evidence" value="ECO:0007669"/>
    <property type="project" value="UniProtKB-SubCell"/>
</dbReference>
<dbReference type="GO" id="GO:0015627">
    <property type="term" value="C:type II protein secretion system complex"/>
    <property type="evidence" value="ECO:0007669"/>
    <property type="project" value="InterPro"/>
</dbReference>
<dbReference type="GO" id="GO:0015628">
    <property type="term" value="P:protein secretion by the type II secretion system"/>
    <property type="evidence" value="ECO:0007669"/>
    <property type="project" value="InterPro"/>
</dbReference>
<dbReference type="Gene3D" id="3.30.1300.30">
    <property type="entry name" value="GSPII I/J protein-like"/>
    <property type="match status" value="1"/>
</dbReference>
<dbReference type="InterPro" id="IPR012902">
    <property type="entry name" value="N_methyl_site"/>
</dbReference>
<dbReference type="InterPro" id="IPR045584">
    <property type="entry name" value="Pilin-like"/>
</dbReference>
<dbReference type="InterPro" id="IPR003413">
    <property type="entry name" value="T2SS_GspI_C"/>
</dbReference>
<dbReference type="InterPro" id="IPR010052">
    <property type="entry name" value="T2SS_protein-GspI"/>
</dbReference>
<dbReference type="NCBIfam" id="TIGR01707">
    <property type="entry name" value="gspI"/>
    <property type="match status" value="1"/>
</dbReference>
<dbReference type="NCBIfam" id="TIGR02532">
    <property type="entry name" value="IV_pilin_GFxxxE"/>
    <property type="match status" value="1"/>
</dbReference>
<dbReference type="PANTHER" id="PTHR38779">
    <property type="entry name" value="TYPE II SECRETION SYSTEM PROTEIN I-RELATED"/>
    <property type="match status" value="1"/>
</dbReference>
<dbReference type="PANTHER" id="PTHR38779:SF2">
    <property type="entry name" value="TYPE II SECRETION SYSTEM PROTEIN I-RELATED"/>
    <property type="match status" value="1"/>
</dbReference>
<dbReference type="Pfam" id="PF07963">
    <property type="entry name" value="N_methyl"/>
    <property type="match status" value="1"/>
</dbReference>
<dbReference type="Pfam" id="PF02501">
    <property type="entry name" value="T2SSI"/>
    <property type="match status" value="1"/>
</dbReference>
<dbReference type="SUPFAM" id="SSF54523">
    <property type="entry name" value="Pili subunits"/>
    <property type="match status" value="1"/>
</dbReference>
<dbReference type="PROSITE" id="PS00409">
    <property type="entry name" value="PROKAR_NTER_METHYL"/>
    <property type="match status" value="1"/>
</dbReference>
<sequence>MNKQKGMTLLEVLVALAIFSLAGLTLLQTTAQQARNAGMMKEKMLASWLADNQQVRLHLNKLWPEKSATGALVTYAGEEWYLSWQGVDTEFSQLRALDIEVRRHKQDTAAIFSLRSYVVHE</sequence>